<organism>
    <name type="scientific">Homo sapiens</name>
    <name type="common">Human</name>
    <dbReference type="NCBI Taxonomy" id="9606"/>
    <lineage>
        <taxon>Eukaryota</taxon>
        <taxon>Metazoa</taxon>
        <taxon>Chordata</taxon>
        <taxon>Craniata</taxon>
        <taxon>Vertebrata</taxon>
        <taxon>Euteleostomi</taxon>
        <taxon>Mammalia</taxon>
        <taxon>Eutheria</taxon>
        <taxon>Euarchontoglires</taxon>
        <taxon>Primates</taxon>
        <taxon>Haplorrhini</taxon>
        <taxon>Catarrhini</taxon>
        <taxon>Hominidae</taxon>
        <taxon>Homo</taxon>
    </lineage>
</organism>
<reference key="1">
    <citation type="journal article" date="1999" name="Mol. Hum. Reprod.">
        <title>Outer dense fibre proteins from human sperm tail: molecular cloning and expression analyses of two cDNA transcripts encoding proteins of approximately 70 kDa.</title>
        <authorList>
            <person name="Petersen C."/>
            <person name="Fuezesi L."/>
            <person name="Hoyer-Fender S."/>
        </authorList>
    </citation>
    <scope>NUCLEOTIDE SEQUENCE [MRNA] (ISOFORM 5)</scope>
    <scope>NUCLEOTIDE SEQUENCE [MRNA] OF 18-829 (ISOFORM 6)</scope>
    <scope>TISSUE SPECIFICITY</scope>
    <source>
        <tissue>Testis</tissue>
    </source>
</reference>
<reference key="2">
    <citation type="journal article" date="2006" name="Mol. Cell. Biol.">
        <title>Requirement of hCenexin for proper mitotic functions of polo-like kinase 1 at the centrosomes.</title>
        <authorList>
            <person name="Soung N.-K."/>
            <person name="Kang Y.H."/>
            <person name="Kim K."/>
            <person name="Kamijo K."/>
            <person name="Yoon H."/>
            <person name="Seong Y.S."/>
            <person name="Kuo Y.-L."/>
            <person name="Miki T."/>
            <person name="Kim S.R."/>
            <person name="Kuriyama R."/>
            <person name="Giam C.-Z."/>
            <person name="Ahn C.H."/>
            <person name="Lee K.S."/>
        </authorList>
    </citation>
    <scope>NUCLEOTIDE SEQUENCE [MRNA] (ISOFORMS 3 AND 4)</scope>
    <scope>FUNCTION</scope>
    <scope>SUBCELLULAR LOCATION</scope>
    <scope>ALTERNATIVE SPLICING</scope>
    <scope>INTERACTION WITH PLK1</scope>
</reference>
<reference key="3">
    <citation type="submission" date="2003-06" db="EMBL/GenBank/DDBJ databases">
        <title>Cloning and characterization of the outer dense fiber protein in spermatogenesis.</title>
        <authorList>
            <person name="Xu Z.Y."/>
            <person name="Huang X.Y."/>
            <person name="Yin L.L."/>
            <person name="Xu M."/>
            <person name="Lu L."/>
            <person name="Li J.M."/>
            <person name="Zhou Z.M."/>
            <person name="Sha J.H."/>
        </authorList>
    </citation>
    <scope>NUCLEOTIDE SEQUENCE [MRNA] (ISOFORMS 3 AND 6)</scope>
    <source>
        <tissue>Testis</tissue>
    </source>
</reference>
<reference key="4">
    <citation type="journal article" date="2004" name="Nat. Genet.">
        <title>Complete sequencing and characterization of 21,243 full-length human cDNAs.</title>
        <authorList>
            <person name="Ota T."/>
            <person name="Suzuki Y."/>
            <person name="Nishikawa T."/>
            <person name="Otsuki T."/>
            <person name="Sugiyama T."/>
            <person name="Irie R."/>
            <person name="Wakamatsu A."/>
            <person name="Hayashi K."/>
            <person name="Sato H."/>
            <person name="Nagai K."/>
            <person name="Kimura K."/>
            <person name="Makita H."/>
            <person name="Sekine M."/>
            <person name="Obayashi M."/>
            <person name="Nishi T."/>
            <person name="Shibahara T."/>
            <person name="Tanaka T."/>
            <person name="Ishii S."/>
            <person name="Yamamoto J."/>
            <person name="Saito K."/>
            <person name="Kawai Y."/>
            <person name="Isono Y."/>
            <person name="Nakamura Y."/>
            <person name="Nagahari K."/>
            <person name="Murakami K."/>
            <person name="Yasuda T."/>
            <person name="Iwayanagi T."/>
            <person name="Wagatsuma M."/>
            <person name="Shiratori A."/>
            <person name="Sudo H."/>
            <person name="Hosoiri T."/>
            <person name="Kaku Y."/>
            <person name="Kodaira H."/>
            <person name="Kondo H."/>
            <person name="Sugawara M."/>
            <person name="Takahashi M."/>
            <person name="Kanda K."/>
            <person name="Yokoi T."/>
            <person name="Furuya T."/>
            <person name="Kikkawa E."/>
            <person name="Omura Y."/>
            <person name="Abe K."/>
            <person name="Kamihara K."/>
            <person name="Katsuta N."/>
            <person name="Sato K."/>
            <person name="Tanikawa M."/>
            <person name="Yamazaki M."/>
            <person name="Ninomiya K."/>
            <person name="Ishibashi T."/>
            <person name="Yamashita H."/>
            <person name="Murakawa K."/>
            <person name="Fujimori K."/>
            <person name="Tanai H."/>
            <person name="Kimata M."/>
            <person name="Watanabe M."/>
            <person name="Hiraoka S."/>
            <person name="Chiba Y."/>
            <person name="Ishida S."/>
            <person name="Ono Y."/>
            <person name="Takiguchi S."/>
            <person name="Watanabe S."/>
            <person name="Yosida M."/>
            <person name="Hotuta T."/>
            <person name="Kusano J."/>
            <person name="Kanehori K."/>
            <person name="Takahashi-Fujii A."/>
            <person name="Hara H."/>
            <person name="Tanase T.-O."/>
            <person name="Nomura Y."/>
            <person name="Togiya S."/>
            <person name="Komai F."/>
            <person name="Hara R."/>
            <person name="Takeuchi K."/>
            <person name="Arita M."/>
            <person name="Imose N."/>
            <person name="Musashino K."/>
            <person name="Yuuki H."/>
            <person name="Oshima A."/>
            <person name="Sasaki N."/>
            <person name="Aotsuka S."/>
            <person name="Yoshikawa Y."/>
            <person name="Matsunawa H."/>
            <person name="Ichihara T."/>
            <person name="Shiohata N."/>
            <person name="Sano S."/>
            <person name="Moriya S."/>
            <person name="Momiyama H."/>
            <person name="Satoh N."/>
            <person name="Takami S."/>
            <person name="Terashima Y."/>
            <person name="Suzuki O."/>
            <person name="Nakagawa S."/>
            <person name="Senoh A."/>
            <person name="Mizoguchi H."/>
            <person name="Goto Y."/>
            <person name="Shimizu F."/>
            <person name="Wakebe H."/>
            <person name="Hishigaki H."/>
            <person name="Watanabe T."/>
            <person name="Sugiyama A."/>
            <person name="Takemoto M."/>
            <person name="Kawakami B."/>
            <person name="Yamazaki M."/>
            <person name="Watanabe K."/>
            <person name="Kumagai A."/>
            <person name="Itakura S."/>
            <person name="Fukuzumi Y."/>
            <person name="Fujimori Y."/>
            <person name="Komiyama M."/>
            <person name="Tashiro H."/>
            <person name="Tanigami A."/>
            <person name="Fujiwara T."/>
            <person name="Ono T."/>
            <person name="Yamada K."/>
            <person name="Fujii Y."/>
            <person name="Ozaki K."/>
            <person name="Hirao M."/>
            <person name="Ohmori Y."/>
            <person name="Kawabata A."/>
            <person name="Hikiji T."/>
            <person name="Kobatake N."/>
            <person name="Inagaki H."/>
            <person name="Ikema Y."/>
            <person name="Okamoto S."/>
            <person name="Okitani R."/>
            <person name="Kawakami T."/>
            <person name="Noguchi S."/>
            <person name="Itoh T."/>
            <person name="Shigeta K."/>
            <person name="Senba T."/>
            <person name="Matsumura K."/>
            <person name="Nakajima Y."/>
            <person name="Mizuno T."/>
            <person name="Morinaga M."/>
            <person name="Sasaki M."/>
            <person name="Togashi T."/>
            <person name="Oyama M."/>
            <person name="Hata H."/>
            <person name="Watanabe M."/>
            <person name="Komatsu T."/>
            <person name="Mizushima-Sugano J."/>
            <person name="Satoh T."/>
            <person name="Shirai Y."/>
            <person name="Takahashi Y."/>
            <person name="Nakagawa K."/>
            <person name="Okumura K."/>
            <person name="Nagase T."/>
            <person name="Nomura N."/>
            <person name="Kikuchi H."/>
            <person name="Masuho Y."/>
            <person name="Yamashita R."/>
            <person name="Nakai K."/>
            <person name="Yada T."/>
            <person name="Nakamura Y."/>
            <person name="Ohara O."/>
            <person name="Isogai T."/>
            <person name="Sugano S."/>
        </authorList>
    </citation>
    <scope>NUCLEOTIDE SEQUENCE [LARGE SCALE MRNA] (ISOFORMS 1; 4 AND 10)</scope>
    <source>
        <tissue>Testis</tissue>
    </source>
</reference>
<reference key="5">
    <citation type="journal article" date="2004" name="Nature">
        <title>DNA sequence and analysis of human chromosome 9.</title>
        <authorList>
            <person name="Humphray S.J."/>
            <person name="Oliver K."/>
            <person name="Hunt A.R."/>
            <person name="Plumb R.W."/>
            <person name="Loveland J.E."/>
            <person name="Howe K.L."/>
            <person name="Andrews T.D."/>
            <person name="Searle S."/>
            <person name="Hunt S.E."/>
            <person name="Scott C.E."/>
            <person name="Jones M.C."/>
            <person name="Ainscough R."/>
            <person name="Almeida J.P."/>
            <person name="Ambrose K.D."/>
            <person name="Ashwell R.I.S."/>
            <person name="Babbage A.K."/>
            <person name="Babbage S."/>
            <person name="Bagguley C.L."/>
            <person name="Bailey J."/>
            <person name="Banerjee R."/>
            <person name="Barker D.J."/>
            <person name="Barlow K.F."/>
            <person name="Bates K."/>
            <person name="Beasley H."/>
            <person name="Beasley O."/>
            <person name="Bird C.P."/>
            <person name="Bray-Allen S."/>
            <person name="Brown A.J."/>
            <person name="Brown J.Y."/>
            <person name="Burford D."/>
            <person name="Burrill W."/>
            <person name="Burton J."/>
            <person name="Carder C."/>
            <person name="Carter N.P."/>
            <person name="Chapman J.C."/>
            <person name="Chen Y."/>
            <person name="Clarke G."/>
            <person name="Clark S.Y."/>
            <person name="Clee C.M."/>
            <person name="Clegg S."/>
            <person name="Collier R.E."/>
            <person name="Corby N."/>
            <person name="Crosier M."/>
            <person name="Cummings A.T."/>
            <person name="Davies J."/>
            <person name="Dhami P."/>
            <person name="Dunn M."/>
            <person name="Dutta I."/>
            <person name="Dyer L.W."/>
            <person name="Earthrowl M.E."/>
            <person name="Faulkner L."/>
            <person name="Fleming C.J."/>
            <person name="Frankish A."/>
            <person name="Frankland J.A."/>
            <person name="French L."/>
            <person name="Fricker D.G."/>
            <person name="Garner P."/>
            <person name="Garnett J."/>
            <person name="Ghori J."/>
            <person name="Gilbert J.G.R."/>
            <person name="Glison C."/>
            <person name="Grafham D.V."/>
            <person name="Gribble S."/>
            <person name="Griffiths C."/>
            <person name="Griffiths-Jones S."/>
            <person name="Grocock R."/>
            <person name="Guy J."/>
            <person name="Hall R.E."/>
            <person name="Hammond S."/>
            <person name="Harley J.L."/>
            <person name="Harrison E.S.I."/>
            <person name="Hart E.A."/>
            <person name="Heath P.D."/>
            <person name="Henderson C.D."/>
            <person name="Hopkins B.L."/>
            <person name="Howard P.J."/>
            <person name="Howden P.J."/>
            <person name="Huckle E."/>
            <person name="Johnson C."/>
            <person name="Johnson D."/>
            <person name="Joy A.A."/>
            <person name="Kay M."/>
            <person name="Keenan S."/>
            <person name="Kershaw J.K."/>
            <person name="Kimberley A.M."/>
            <person name="King A."/>
            <person name="Knights A."/>
            <person name="Laird G.K."/>
            <person name="Langford C."/>
            <person name="Lawlor S."/>
            <person name="Leongamornlert D.A."/>
            <person name="Leversha M."/>
            <person name="Lloyd C."/>
            <person name="Lloyd D.M."/>
            <person name="Lovell J."/>
            <person name="Martin S."/>
            <person name="Mashreghi-Mohammadi M."/>
            <person name="Matthews L."/>
            <person name="McLaren S."/>
            <person name="McLay K.E."/>
            <person name="McMurray A."/>
            <person name="Milne S."/>
            <person name="Nickerson T."/>
            <person name="Nisbett J."/>
            <person name="Nordsiek G."/>
            <person name="Pearce A.V."/>
            <person name="Peck A.I."/>
            <person name="Porter K.M."/>
            <person name="Pandian R."/>
            <person name="Pelan S."/>
            <person name="Phillimore B."/>
            <person name="Povey S."/>
            <person name="Ramsey Y."/>
            <person name="Rand V."/>
            <person name="Scharfe M."/>
            <person name="Sehra H.K."/>
            <person name="Shownkeen R."/>
            <person name="Sims S.K."/>
            <person name="Skuce C.D."/>
            <person name="Smith M."/>
            <person name="Steward C.A."/>
            <person name="Swarbreck D."/>
            <person name="Sycamore N."/>
            <person name="Tester J."/>
            <person name="Thorpe A."/>
            <person name="Tracey A."/>
            <person name="Tromans A."/>
            <person name="Thomas D.W."/>
            <person name="Wall M."/>
            <person name="Wallis J.M."/>
            <person name="West A.P."/>
            <person name="Whitehead S.L."/>
            <person name="Willey D.L."/>
            <person name="Williams S.A."/>
            <person name="Wilming L."/>
            <person name="Wray P.W."/>
            <person name="Young L."/>
            <person name="Ashurst J.L."/>
            <person name="Coulson A."/>
            <person name="Blocker H."/>
            <person name="Durbin R.M."/>
            <person name="Sulston J.E."/>
            <person name="Hubbard T."/>
            <person name="Jackson M.J."/>
            <person name="Bentley D.R."/>
            <person name="Beck S."/>
            <person name="Rogers J."/>
            <person name="Dunham I."/>
        </authorList>
    </citation>
    <scope>NUCLEOTIDE SEQUENCE [LARGE SCALE GENOMIC DNA]</scope>
</reference>
<reference key="6">
    <citation type="submission" date="2005-07" db="EMBL/GenBank/DDBJ databases">
        <authorList>
            <person name="Mural R.J."/>
            <person name="Istrail S."/>
            <person name="Sutton G.G."/>
            <person name="Florea L."/>
            <person name="Halpern A.L."/>
            <person name="Mobarry C.M."/>
            <person name="Lippert R."/>
            <person name="Walenz B."/>
            <person name="Shatkay H."/>
            <person name="Dew I."/>
            <person name="Miller J.R."/>
            <person name="Flanigan M.J."/>
            <person name="Edwards N.J."/>
            <person name="Bolanos R."/>
            <person name="Fasulo D."/>
            <person name="Halldorsson B.V."/>
            <person name="Hannenhalli S."/>
            <person name="Turner R."/>
            <person name="Yooseph S."/>
            <person name="Lu F."/>
            <person name="Nusskern D.R."/>
            <person name="Shue B.C."/>
            <person name="Zheng X.H."/>
            <person name="Zhong F."/>
            <person name="Delcher A.L."/>
            <person name="Huson D.H."/>
            <person name="Kravitz S.A."/>
            <person name="Mouchard L."/>
            <person name="Reinert K."/>
            <person name="Remington K.A."/>
            <person name="Clark A.G."/>
            <person name="Waterman M.S."/>
            <person name="Eichler E.E."/>
            <person name="Adams M.D."/>
            <person name="Hunkapiller M.W."/>
            <person name="Myers E.W."/>
            <person name="Venter J.C."/>
        </authorList>
    </citation>
    <scope>NUCLEOTIDE SEQUENCE [LARGE SCALE GENOMIC DNA]</scope>
</reference>
<reference key="7">
    <citation type="journal article" date="2004" name="Genome Res.">
        <title>The status, quality, and expansion of the NIH full-length cDNA project: the Mammalian Gene Collection (MGC).</title>
        <authorList>
            <consortium name="The MGC Project Team"/>
        </authorList>
    </citation>
    <scope>NUCLEOTIDE SEQUENCE [LARGE SCALE MRNA] (ISOFORMS 1 AND 2)</scope>
    <source>
        <tissue>Eye</tissue>
        <tissue>Testis</tissue>
    </source>
</reference>
<reference key="8">
    <citation type="journal article" date="2003" name="Nature">
        <title>Proteomic characterization of the human centrosome by protein correlation profiling.</title>
        <authorList>
            <person name="Andersen J.S."/>
            <person name="Wilkinson C.J."/>
            <person name="Mayor T."/>
            <person name="Mortensen P."/>
            <person name="Nigg E.A."/>
            <person name="Mann M."/>
        </authorList>
    </citation>
    <scope>IDENTIFICATION BY MASS SPECTROMETRY</scope>
    <scope>SUBCELLULAR LOCATION [LARGE SCALE ANALYSIS]</scope>
    <source>
        <tissue>Lymphoblast</tissue>
    </source>
</reference>
<reference key="9">
    <citation type="journal article" date="2009" name="Sci. Signal.">
        <title>Quantitative phosphoproteomic analysis of T cell receptor signaling reveals system-wide modulation of protein-protein interactions.</title>
        <authorList>
            <person name="Mayya V."/>
            <person name="Lundgren D.H."/>
            <person name="Hwang S.-I."/>
            <person name="Rezaul K."/>
            <person name="Wu L."/>
            <person name="Eng J.K."/>
            <person name="Rodionov V."/>
            <person name="Han D.K."/>
        </authorList>
    </citation>
    <scope>IDENTIFICATION BY MASS SPECTROMETRY [LARGE SCALE ANALYSIS]</scope>
    <source>
        <tissue>Leukemic T-cell</tissue>
    </source>
</reference>
<reference key="10">
    <citation type="journal article" date="2013" name="J. Cell Biol.">
        <title>The microtubule affinity regulating kinase MARK4 promotes axoneme extension during early ciliogenesis.</title>
        <authorList>
            <person name="Kuhns S."/>
            <person name="Schmidt K.N."/>
            <person name="Reymann J."/>
            <person name="Gilbert D.F."/>
            <person name="Neuner A."/>
            <person name="Hub B."/>
            <person name="Carvalho R."/>
            <person name="Wiedemann P."/>
            <person name="Zentgraf H."/>
            <person name="Erfle H."/>
            <person name="Klingmuller U."/>
            <person name="Boutros M."/>
            <person name="Pereira G."/>
        </authorList>
    </citation>
    <scope>INTERACTION WITH MARK4</scope>
    <scope>SUBCELLULAR LOCATION</scope>
</reference>
<reference key="11">
    <citation type="journal article" date="2013" name="J. Proteome Res.">
        <title>Toward a comprehensive characterization of a human cancer cell phosphoproteome.</title>
        <authorList>
            <person name="Zhou H."/>
            <person name="Di Palma S."/>
            <person name="Preisinger C."/>
            <person name="Peng M."/>
            <person name="Polat A.N."/>
            <person name="Heck A.J."/>
            <person name="Mohammed S."/>
        </authorList>
    </citation>
    <scope>PHOSPHORYLATION [LARGE SCALE ANALYSIS] AT THR-231</scope>
    <scope>IDENTIFICATION BY MASS SPECTROMETRY [LARGE SCALE ANALYSIS]</scope>
    <source>
        <tissue>Erythroleukemia</tissue>
    </source>
</reference>
<reference key="12">
    <citation type="journal article" date="2014" name="J. Proteomics">
        <title>An enzyme assisted RP-RPLC approach for in-depth analysis of human liver phosphoproteome.</title>
        <authorList>
            <person name="Bian Y."/>
            <person name="Song C."/>
            <person name="Cheng K."/>
            <person name="Dong M."/>
            <person name="Wang F."/>
            <person name="Huang J."/>
            <person name="Sun D."/>
            <person name="Wang L."/>
            <person name="Ye M."/>
            <person name="Zou H."/>
        </authorList>
    </citation>
    <scope>IDENTIFICATION BY MASS SPECTROMETRY [LARGE SCALE ANALYSIS]</scope>
    <source>
        <tissue>Liver</tissue>
    </source>
</reference>
<reference key="13">
    <citation type="journal article" date="2015" name="Proteomics">
        <title>N-terminome analysis of the human mitochondrial proteome.</title>
        <authorList>
            <person name="Vaca Jacome A.S."/>
            <person name="Rabilloud T."/>
            <person name="Schaeffer-Reiss C."/>
            <person name="Rompais M."/>
            <person name="Ayoub D."/>
            <person name="Lane L."/>
            <person name="Bairoch A."/>
            <person name="Van Dorsselaer A."/>
            <person name="Carapito C."/>
        </authorList>
    </citation>
    <scope>IDENTIFICATION BY MASS SPECTROMETRY [LARGE SCALE ANALYSIS]</scope>
</reference>
<reference key="14">
    <citation type="journal article" date="2017" name="Nat. Struct. Mol. Biol.">
        <title>Site-specific mapping of the human SUMO proteome reveals co-modification with phosphorylation.</title>
        <authorList>
            <person name="Hendriks I.A."/>
            <person name="Lyon D."/>
            <person name="Young C."/>
            <person name="Jensen L.J."/>
            <person name="Vertegaal A.C."/>
            <person name="Nielsen M.L."/>
        </authorList>
    </citation>
    <scope>SUMOYLATION [LARGE SCALE ANALYSIS] AT LYS-138</scope>
    <scope>IDENTIFICATION BY MASS SPECTROMETRY [LARGE SCALE ANALYSIS]</scope>
</reference>
<reference key="15">
    <citation type="journal article" date="2019" name="Nat. Commun.">
        <title>Loss-of-function mutations in QRICH2 cause male infertility with multiple morphological abnormalities of the sperm flagella.</title>
        <authorList>
            <person name="Shen Y."/>
            <person name="Zhang F."/>
            <person name="Li F."/>
            <person name="Jiang X."/>
            <person name="Yang Y."/>
            <person name="Li X."/>
            <person name="Li W."/>
            <person name="Wang X."/>
            <person name="Cheng J."/>
            <person name="Liu M."/>
            <person name="Zhang X."/>
            <person name="Yuan G."/>
            <person name="Pei X."/>
            <person name="Cai K."/>
            <person name="Hu F."/>
            <person name="Sun J."/>
            <person name="Yan L."/>
            <person name="Tang L."/>
            <person name="Jiang C."/>
            <person name="Tu W."/>
            <person name="Xu J."/>
            <person name="Wu H."/>
            <person name="Kong W."/>
            <person name="Li S."/>
            <person name="Wang K."/>
            <person name="Sheng K."/>
            <person name="Zhao X."/>
            <person name="Yue H."/>
            <person name="Yang X."/>
            <person name="Xu W."/>
        </authorList>
    </citation>
    <scope>INTERACTION WITH QRICH2</scope>
</reference>
<protein>
    <recommendedName>
        <fullName>Outer dense fiber protein 2</fullName>
    </recommendedName>
    <alternativeName>
        <fullName>Cenexin</fullName>
    </alternativeName>
    <alternativeName>
        <fullName>Outer dense fiber of sperm tails protein 2</fullName>
    </alternativeName>
</protein>
<name>ODFP2_HUMAN</name>
<evidence type="ECO:0000250" key="1">
    <source>
        <dbReference type="UniProtKB" id="A3KGV1"/>
    </source>
</evidence>
<evidence type="ECO:0000250" key="2">
    <source>
        <dbReference type="UniProtKB" id="Q2MJU7"/>
    </source>
</evidence>
<evidence type="ECO:0000250" key="3">
    <source>
        <dbReference type="UniProtKB" id="Q6AYX5"/>
    </source>
</evidence>
<evidence type="ECO:0000255" key="4"/>
<evidence type="ECO:0000256" key="5">
    <source>
        <dbReference type="SAM" id="MobiDB-lite"/>
    </source>
</evidence>
<evidence type="ECO:0000269" key="6">
    <source>
    </source>
</evidence>
<evidence type="ECO:0000269" key="7">
    <source>
    </source>
</evidence>
<evidence type="ECO:0000269" key="8">
    <source>
    </source>
</evidence>
<evidence type="ECO:0000269" key="9">
    <source>
    </source>
</evidence>
<evidence type="ECO:0000269" key="10">
    <source>
    </source>
</evidence>
<evidence type="ECO:0000303" key="11">
    <source>
    </source>
</evidence>
<evidence type="ECO:0000303" key="12">
    <source>
    </source>
</evidence>
<evidence type="ECO:0000303" key="13">
    <source>
    </source>
</evidence>
<evidence type="ECO:0000303" key="14">
    <source>
    </source>
</evidence>
<evidence type="ECO:0000303" key="15">
    <source ref="3"/>
</evidence>
<evidence type="ECO:0000305" key="16"/>
<evidence type="ECO:0007744" key="17">
    <source>
    </source>
</evidence>
<evidence type="ECO:0007744" key="18">
    <source>
    </source>
</evidence>
<gene>
    <name type="primary">ODF2</name>
</gene>
<comment type="function">
    <text evidence="8">Seems to be a major component of sperm tail outer dense fibers (ODF). ODFs are filamentous structures located on the outside of the axoneme in the midpiece and principal piece of the mammalian sperm tail and may help to maintain the passive elastic structures and elastic recoil of the sperm tail. May have a modulating influence on sperm motility. Functions as a general scaffold protein that is specifically localized at the distal/subdistal appendages of mother centrioles. Component of the centrosome matrix required for the localization of PLK1 and NIN to the centrosomes. Required for the formation and/or maintenance of normal CETN1 assembly.</text>
</comment>
<comment type="subunit">
    <text evidence="1 8 9 10">Self-associates. Associates with microtubules and forms a fibrillar structure partially linked to the microtubule network. Interacts via its C-terminus with PLK1 (PubMed:16966375). Interacts with ODF1 (By similarity). Interacts with MARK4; the interaction is required for localization of ODF2 to centrioles (PubMed:23400999). Interacts with TSSK4 (By similarity). Interacts with AKNA (By similarity). Interacts with QRICH2 (PubMed:30683861). Interacts with CFAP58 (By similarity). Interacts with BBOF1 (By similarity). Interacts with CCDC38 (By similarity). Interacts with CCDC42 (By similarity).</text>
</comment>
<comment type="interaction">
    <interactant intactId="EBI-8744243">
        <id>Q5BJF6</id>
    </interactant>
    <interactant intactId="EBI-744556">
        <id>Q96HB5</id>
        <label>CCDC120</label>
    </interactant>
    <organismsDiffer>false</organismsDiffer>
    <experiments>5</experiments>
</comment>
<comment type="interaction">
    <interactant intactId="EBI-8744243">
        <id>Q5BJF6</id>
    </interactant>
    <interactant intactId="EBI-1210753">
        <id>Q7Z417</id>
        <label>NUFIP2</label>
    </interactant>
    <organismsDiffer>false</organismsDiffer>
    <experiments>3</experiments>
</comment>
<comment type="interaction">
    <interactant intactId="EBI-9090919">
        <id>Q5BJF6-2</id>
    </interactant>
    <interactant intactId="EBI-25837549">
        <id>P28329-3</id>
        <label>CHAT</label>
    </interactant>
    <organismsDiffer>false</organismsDiffer>
    <experiments>3</experiments>
</comment>
<comment type="interaction">
    <interactant intactId="EBI-9090919">
        <id>Q5BJF6-2</id>
    </interactant>
    <interactant intactId="EBI-348399">
        <id>P22607</id>
        <label>FGFR3</label>
    </interactant>
    <organismsDiffer>false</organismsDiffer>
    <experiments>3</experiments>
</comment>
<comment type="interaction">
    <interactant intactId="EBI-9090919">
        <id>Q5BJF6-2</id>
    </interactant>
    <interactant intactId="EBI-8285963">
        <id>Q14957</id>
        <label>GRIN2C</label>
    </interactant>
    <organismsDiffer>false</organismsDiffer>
    <experiments>3</experiments>
</comment>
<comment type="interaction">
    <interactant intactId="EBI-9090919">
        <id>Q5BJF6-2</id>
    </interactant>
    <interactant intactId="EBI-352682">
        <id>P04792</id>
        <label>HSPB1</label>
    </interactant>
    <organismsDiffer>false</organismsDiffer>
    <experiments>3</experiments>
</comment>
<comment type="interaction">
    <interactant intactId="EBI-9090919">
        <id>Q5BJF6-2</id>
    </interactant>
    <interactant intactId="EBI-488533">
        <id>Q8WYH8</id>
        <label>ING5</label>
    </interactant>
    <organismsDiffer>false</organismsDiffer>
    <experiments>3</experiments>
</comment>
<comment type="interaction">
    <interactant intactId="EBI-9090919">
        <id>Q5BJF6-2</id>
    </interactant>
    <interactant intactId="EBI-10975473">
        <id>O60333-2</id>
        <label>KIF1B</label>
    </interactant>
    <organismsDiffer>false</organismsDiffer>
    <experiments>3</experiments>
</comment>
<comment type="interaction">
    <interactant intactId="EBI-9090919">
        <id>Q5BJF6-2</id>
    </interactant>
    <interactant intactId="EBI-16439278">
        <id>Q6FHY5</id>
        <label>MEOX2</label>
    </interactant>
    <organismsDiffer>false</organismsDiffer>
    <experiments>3</experiments>
</comment>
<comment type="interaction">
    <interactant intactId="EBI-9090919">
        <id>Q5BJF6-2</id>
    </interactant>
    <interactant intactId="EBI-396669">
        <id>Q9Y3C5</id>
        <label>RNF11</label>
    </interactant>
    <organismsDiffer>false</organismsDiffer>
    <experiments>3</experiments>
</comment>
<comment type="interaction">
    <interactant intactId="EBI-9090919">
        <id>Q5BJF6-2</id>
    </interactant>
    <interactant intactId="EBI-632715">
        <id>Q13573</id>
        <label>SNW1</label>
    </interactant>
    <organismsDiffer>false</organismsDiffer>
    <experiments>3</experiments>
</comment>
<comment type="interaction">
    <interactant intactId="EBI-9090919">
        <id>Q5BJF6-2</id>
    </interactant>
    <interactant intactId="EBI-5235340">
        <id>Q7Z699</id>
        <label>SPRED1</label>
    </interactant>
    <organismsDiffer>false</organismsDiffer>
    <experiments>3</experiments>
</comment>
<comment type="interaction">
    <interactant intactId="EBI-9090919">
        <id>Q5BJF6-2</id>
    </interactant>
    <interactant intactId="EBI-523498">
        <id>O00463</id>
        <label>TRAF5</label>
    </interactant>
    <organismsDiffer>false</organismsDiffer>
    <experiments>3</experiments>
</comment>
<comment type="interaction">
    <interactant intactId="EBI-9090919">
        <id>Q5BJF6-2</id>
    </interactant>
    <interactant intactId="EBI-720609">
        <id>O76024</id>
        <label>WFS1</label>
    </interactant>
    <organismsDiffer>false</organismsDiffer>
    <experiments>3</experiments>
</comment>
<comment type="subcellular location">
    <subcellularLocation>
        <location evidence="7 8">Cytoplasm</location>
        <location evidence="7 8">Cytoskeleton</location>
        <location evidence="7 8">Microtubule organizing center</location>
        <location evidence="7 8">Centrosome</location>
    </subcellularLocation>
    <subcellularLocation>
        <location evidence="1">Cell projection</location>
        <location evidence="1">Cilium</location>
    </subcellularLocation>
    <subcellularLocation>
        <location evidence="9">Cytoplasm</location>
        <location evidence="9">Cytoskeleton</location>
        <location evidence="9">Microtubule organizing center</location>
        <location evidence="9">Centrosome</location>
        <location evidence="9">Centriole</location>
    </subcellularLocation>
    <subcellularLocation>
        <location evidence="1">Cytoplasm</location>
        <location evidence="1">Cytoskeleton</location>
        <location evidence="1">Spindle pole</location>
    </subcellularLocation>
    <subcellularLocation>
        <location evidence="1">Cell projection</location>
        <location evidence="1">Cilium</location>
        <location evidence="1">Flagellum</location>
    </subcellularLocation>
    <text evidence="1">Localized at the microtubule organizing centers in interphase and spindle poles in mitosis. Localized at the distal/subdistal appendages of mother centrioles.</text>
</comment>
<comment type="alternative products">
    <event type="alternative splicing"/>
    <isoform>
        <id>Q5BJF6-1</id>
        <name>1</name>
        <sequence type="displayed"/>
    </isoform>
    <isoform>
        <id>Q5BJF6-2</id>
        <name>2</name>
        <sequence type="described" ref="VSP_027665 VSP_027667"/>
    </isoform>
    <isoform>
        <id>Q5BJF6-3</id>
        <name>3</name>
        <name>Cenexin 1</name>
        <sequence type="described" ref="VSP_027666 VSP_027667"/>
    </isoform>
    <isoform>
        <id>Q5BJF6-4</id>
        <name>4</name>
        <name>Cenexin 1 variant 1</name>
        <sequence type="described" ref="VSP_027666"/>
    </isoform>
    <isoform>
        <id>Q5BJF6-5</id>
        <name>5</name>
        <name>Cenexin 1</name>
        <name>ODF2/1</name>
        <sequence type="described" ref="VSP_027667 VSP_027668 VSP_027669"/>
    </isoform>
    <isoform>
        <id>Q5BJF6-6</id>
        <name>6</name>
        <name>Isoform 3</name>
        <name>ODF2/2</name>
        <sequence type="described" ref="VSP_027668 VSP_027669"/>
    </isoform>
    <isoform>
        <id>Q5BJF6-7</id>
        <name>7</name>
        <sequence type="described" ref="VSP_042071 VSP_027668 VSP_027669"/>
    </isoform>
    <isoform>
        <id>Q5BJF6-8</id>
        <name>8</name>
        <sequence type="described" ref="VSP_042070 VSP_027667 VSP_027668 VSP_027669"/>
    </isoform>
    <isoform>
        <id>Q5BJF6-9</id>
        <name>9</name>
        <sequence type="described" ref="VSP_027666 VSP_042072 VSP_027668 VSP_027669"/>
    </isoform>
    <isoform>
        <id>Q5BJF6-10</id>
        <name>10</name>
        <sequence type="described" ref="VSP_044946 VSP_027668 VSP_027669"/>
    </isoform>
</comment>
<comment type="tissue specificity">
    <text evidence="6">Testis-specific (at protein level). Highly expressed in cytoplasm of step 2 round spermatids. Detected in the middle piece and extends to about half the principal piece of the sperm tails.</text>
</comment>
<comment type="PTM">
    <text evidence="1 2">Tyrosine phosphorylated. Phosphorylated by TSSK4 on Ser-95.</text>
</comment>
<comment type="miscellaneous">
    <molecule>Isoform 5</molecule>
    <text evidence="16">Major.</text>
</comment>
<comment type="similarity">
    <text evidence="16">Belongs to the ODF2 family.</text>
</comment>
<comment type="sequence caution" evidence="16">
    <conflict type="erroneous initiation">
        <sequence resource="EMBL-CDS" id="AAC08409"/>
    </conflict>
    <text>Truncated N-terminus.</text>
</comment>
<keyword id="KW-0025">Alternative splicing</keyword>
<keyword id="KW-0966">Cell projection</keyword>
<keyword id="KW-0969">Cilium</keyword>
<keyword id="KW-0175">Coiled coil</keyword>
<keyword id="KW-0963">Cytoplasm</keyword>
<keyword id="KW-0206">Cytoskeleton</keyword>
<keyword id="KW-0217">Developmental protein</keyword>
<keyword id="KW-0221">Differentiation</keyword>
<keyword id="KW-0282">Flagellum</keyword>
<keyword id="KW-1017">Isopeptide bond</keyword>
<keyword id="KW-0493">Microtubule</keyword>
<keyword id="KW-0597">Phosphoprotein</keyword>
<keyword id="KW-1267">Proteomics identification</keyword>
<keyword id="KW-1185">Reference proteome</keyword>
<keyword id="KW-0744">Spermatogenesis</keyword>
<keyword id="KW-0832">Ubl conjugation</keyword>
<feature type="chain" id="PRO_0000299455" description="Outer dense fiber protein 2">
    <location>
        <begin position="1"/>
        <end position="829"/>
    </location>
</feature>
<feature type="region of interest" description="Disordered" evidence="5">
    <location>
        <begin position="392"/>
        <end position="413"/>
    </location>
</feature>
<feature type="region of interest" description="Interaction with BBOF1" evidence="1">
    <location>
        <begin position="537"/>
        <end position="701"/>
    </location>
</feature>
<feature type="coiled-coil region" evidence="4">
    <location>
        <begin position="144"/>
        <end position="217"/>
    </location>
</feature>
<feature type="coiled-coil region" evidence="4">
    <location>
        <begin position="245"/>
        <end position="423"/>
    </location>
</feature>
<feature type="coiled-coil region" evidence="4">
    <location>
        <begin position="461"/>
        <end position="798"/>
    </location>
</feature>
<feature type="modified residue" description="Phosphoserine" evidence="3">
    <location>
        <position position="73"/>
    </location>
</feature>
<feature type="modified residue" description="Phosphoserine" evidence="3">
    <location>
        <position position="74"/>
    </location>
</feature>
<feature type="modified residue" description="Phosphothreonine" evidence="3">
    <location>
        <position position="92"/>
    </location>
</feature>
<feature type="modified residue" description="Phosphoserine; by TSSK4" evidence="1">
    <location>
        <position position="95"/>
    </location>
</feature>
<feature type="modified residue" description="Phosphoserine" evidence="3">
    <location>
        <position position="106"/>
    </location>
</feature>
<feature type="modified residue" description="Phosphoserine" evidence="3">
    <location>
        <position position="109"/>
    </location>
</feature>
<feature type="modified residue" description="Phosphothreonine" evidence="3">
    <location>
        <position position="110"/>
    </location>
</feature>
<feature type="modified residue" description="Phosphoserine" evidence="3">
    <location>
        <position position="115"/>
    </location>
</feature>
<feature type="modified residue" description="Phosphoserine" evidence="3">
    <location>
        <position position="129"/>
    </location>
</feature>
<feature type="modified residue" description="Phosphoserine" evidence="3">
    <location>
        <position position="139"/>
    </location>
</feature>
<feature type="modified residue" description="Phosphothreonine" evidence="17">
    <location>
        <position position="231"/>
    </location>
</feature>
<feature type="modified residue" description="Phosphoserine" evidence="3">
    <location>
        <position position="261"/>
    </location>
</feature>
<feature type="modified residue" description="Phosphoserine" evidence="3">
    <location>
        <position position="632"/>
    </location>
</feature>
<feature type="cross-link" description="Glycyl lysine isopeptide (Lys-Gly) (interchain with G-Cter in SUMO2)" evidence="18">
    <location>
        <position position="138"/>
    </location>
</feature>
<feature type="splice variant" id="VSP_027665" description="In isoform 2." evidence="13">
    <location>
        <begin position="1"/>
        <end position="47"/>
    </location>
</feature>
<feature type="splice variant" id="VSP_027666" description="In isoform 3, isoform 4 and isoform 9." evidence="12 14 15">
    <original>MSASSSGGSPRFPSCGKNGVTSLTQKKVLRAPCGAPSVTVT</original>
    <variation>MKDRSSTPPLHVHVDENTPVHVHIKKLPKPSATSSQ</variation>
    <location>
        <begin position="1"/>
        <end position="41"/>
    </location>
</feature>
<feature type="splice variant" id="VSP_042071" description="In isoform 7." evidence="16">
    <original>MSASSSGGSPR</original>
    <variation>MGELPTGCRKRRRKRGGAAARARLHPPRRLHGTTLASDFNDFIRRRFWAQPCRSW</variation>
    <location>
        <begin position="1"/>
        <end position="11"/>
    </location>
</feature>
<feature type="splice variant" id="VSP_042070" description="In isoform 8." evidence="16">
    <original>MSASSSGGSPR</original>
    <variation>MGRNRYPPACW</variation>
    <location>
        <begin position="1"/>
        <end position="11"/>
    </location>
</feature>
<feature type="splice variant" id="VSP_044946" description="In isoform 10." evidence="12">
    <original>MSASSSGGSP</original>
    <variation>MADQQGPHQN</variation>
    <location>
        <begin position="1"/>
        <end position="10"/>
    </location>
</feature>
<feature type="splice variant" id="VSP_042072" description="In isoform 9." evidence="16">
    <location>
        <begin position="65"/>
        <end position="140"/>
    </location>
</feature>
<feature type="splice variant" id="VSP_027667" description="In isoform 2, isoform 3, isoform 5 and isoform 8." evidence="11 13 14 15">
    <location>
        <begin position="65"/>
        <end position="83"/>
    </location>
</feature>
<feature type="splice variant" id="VSP_027668" description="In isoform 5, isoform 6, isoform 7, isoform 8, isoform 9 and isoform 10." evidence="11 12 15">
    <original>IEHQGDKLEMAREKHQASQK</original>
    <variation>VRDWQKGSHELTRAGARIPR</variation>
    <location>
        <begin position="638"/>
        <end position="657"/>
    </location>
</feature>
<feature type="splice variant" id="VSP_027669" description="In isoform 5, isoform 6, isoform 7, isoform 8, isoform 9 and isoform 10." evidence="11 12 15">
    <location>
        <begin position="658"/>
        <end position="829"/>
    </location>
</feature>
<feature type="sequence variant" id="VAR_034821" description="In dbSNP:rs16930426.">
    <original>T</original>
    <variation>S</variation>
    <location>
        <position position="710"/>
    </location>
</feature>
<feature type="sequence conflict" description="In Ref. 3; AAP83847." evidence="16" ref="3">
    <original>T</original>
    <variation>A</variation>
    <location>
        <position position="39"/>
    </location>
</feature>
<feature type="sequence conflict" description="In Ref. 3; AAP83847." evidence="16" ref="3">
    <original>I</original>
    <variation>R</variation>
    <location>
        <position position="194"/>
    </location>
</feature>
<sequence length="829" mass="95401">MSASSSGGSPRFPSCGKNGVTSLTQKKVLRAPCGAPSVTVTKSHKRGMKGDTVNVRRSVRVKTKVPWMPPGKSSARPVGCKWENPPHCLEITPPSSEKLVSVMRLSDLSTEDDDSGHCKMNRYDKKIDSLMNAVGCLKSEVKMQKGERQMAKRFLEERKEELEEVAHELAETEHENTVLRHNIERMKEEKDFTILQKKHLQQEKECLMSKLVEAEMDGAAAAKQVMALKDTIGKLKTEKQMTCTDINTLTRQKELLLQKLSTFEETNRTLRDLLREQHCKEDSERLMEQQGALLKRLAEADSEKARLLLLLQDKDKEVEELLQEIQCEKAQAKTASELSKSMESMRGHLQAQLRSKEAENSRLCMQIKNLERSGNQHKAEVEAIMEQLKELKQKGDRDKESLKKAIRAQKERAEKSEEYAEQLHVQLADKDLYVAEALSTLESWRSRYNQVVKEKGDLELEIIVLNDRVTDLVNQQQTLEEKMREDRDSLVERLHRQTAEYSAFKLENERLKASFAPMEDKLNQAHLEVQQLKASVKNYEGMIDNYKSQVMKTRLEADEVAAQLERCDKENKILKDEMNKEIEAARRQFQSQLADLQQLPDILKITEAKLAECQDQLQGYERKNIDLTAIISDLRSRIEHQGDKLEMAREKHQASQKENKQLSLKVDELERKLEATSAQNIEFLQVIAKREEAIHQSQLRLEEKTRECGTLARQLESAIEDARRQVEQTKEHALSKERAAQNKILDLETQLSRTKTELSQLRRSRDDADRRYQSRLQDLKDRLEQSESTNRSMQNYVQFLKSSYANVFGDGPYSTFLTSSPIRSRSPPA</sequence>
<dbReference type="EMBL" id="AF012549">
    <property type="protein sequence ID" value="AAB66337.1"/>
    <property type="molecule type" value="mRNA"/>
</dbReference>
<dbReference type="EMBL" id="AF053970">
    <property type="protein sequence ID" value="AAC08409.1"/>
    <property type="status" value="ALT_INIT"/>
    <property type="molecule type" value="mRNA"/>
</dbReference>
<dbReference type="EMBL" id="DQ444713">
    <property type="protein sequence ID" value="ABE01856.1"/>
    <property type="molecule type" value="mRNA"/>
</dbReference>
<dbReference type="EMBL" id="DQ444714">
    <property type="protein sequence ID" value="ABE01857.1"/>
    <property type="molecule type" value="mRNA"/>
</dbReference>
<dbReference type="EMBL" id="AY319414">
    <property type="protein sequence ID" value="AAP83847.1"/>
    <property type="molecule type" value="mRNA"/>
</dbReference>
<dbReference type="EMBL" id="AY366499">
    <property type="protein sequence ID" value="AAQ73195.1"/>
    <property type="molecule type" value="mRNA"/>
</dbReference>
<dbReference type="EMBL" id="AK299303">
    <property type="protein sequence ID" value="BAG61316.1"/>
    <property type="molecule type" value="mRNA"/>
</dbReference>
<dbReference type="EMBL" id="AK301842">
    <property type="protein sequence ID" value="BAG63285.1"/>
    <property type="molecule type" value="mRNA"/>
</dbReference>
<dbReference type="EMBL" id="AK302684">
    <property type="protein sequence ID" value="BAG63914.1"/>
    <property type="molecule type" value="mRNA"/>
</dbReference>
<dbReference type="EMBL" id="AL359091">
    <property type="status" value="NOT_ANNOTATED_CDS"/>
    <property type="molecule type" value="Genomic_DNA"/>
</dbReference>
<dbReference type="EMBL" id="AL445287">
    <property type="status" value="NOT_ANNOTATED_CDS"/>
    <property type="molecule type" value="Genomic_DNA"/>
</dbReference>
<dbReference type="EMBL" id="CH471090">
    <property type="protein sequence ID" value="EAW87791.1"/>
    <property type="molecule type" value="Genomic_DNA"/>
</dbReference>
<dbReference type="EMBL" id="CH471090">
    <property type="protein sequence ID" value="EAW87793.1"/>
    <property type="molecule type" value="Genomic_DNA"/>
</dbReference>
<dbReference type="EMBL" id="CH471090">
    <property type="protein sequence ID" value="EAW87795.1"/>
    <property type="molecule type" value="Genomic_DNA"/>
</dbReference>
<dbReference type="EMBL" id="BC091500">
    <property type="protein sequence ID" value="AAH91500.1"/>
    <property type="molecule type" value="mRNA"/>
</dbReference>
<dbReference type="EMBL" id="BC010629">
    <property type="protein sequence ID" value="AAH10629.1"/>
    <property type="molecule type" value="mRNA"/>
</dbReference>
<dbReference type="CCDS" id="CCDS56585.1">
    <molecule id="Q5BJF6-10"/>
</dbReference>
<dbReference type="CCDS" id="CCDS56586.1">
    <molecule id="Q5BJF6-7"/>
</dbReference>
<dbReference type="CCDS" id="CCDS56587.1">
    <molecule id="Q5BJF6-8"/>
</dbReference>
<dbReference type="CCDS" id="CCDS56588.1">
    <molecule id="Q5BJF6-1"/>
</dbReference>
<dbReference type="CCDS" id="CCDS56589.1">
    <molecule id="Q5BJF6-9"/>
</dbReference>
<dbReference type="CCDS" id="CCDS56590.1">
    <molecule id="Q5BJF6-4"/>
</dbReference>
<dbReference type="CCDS" id="CCDS6902.1">
    <molecule id="Q5BJF6-5"/>
</dbReference>
<dbReference type="PIR" id="T03791">
    <property type="entry name" value="T03791"/>
</dbReference>
<dbReference type="RefSeq" id="NP_001229281.1">
    <molecule id="Q5BJF6-4"/>
    <property type="nucleotide sequence ID" value="NM_001242352.2"/>
</dbReference>
<dbReference type="RefSeq" id="NP_001229282.1">
    <molecule id="Q5BJF6-1"/>
    <property type="nucleotide sequence ID" value="NM_001242353.2"/>
</dbReference>
<dbReference type="RefSeq" id="NP_001229283.1">
    <molecule id="Q5BJF6-9"/>
    <property type="nucleotide sequence ID" value="NM_001242354.2"/>
</dbReference>
<dbReference type="RefSeq" id="NP_001338513.1">
    <molecule id="Q5BJF6-4"/>
    <property type="nucleotide sequence ID" value="NM_001351584.2"/>
</dbReference>
<dbReference type="RefSeq" id="NP_001338514.1">
    <molecule id="Q5BJF6-4"/>
    <property type="nucleotide sequence ID" value="NM_001351585.2"/>
</dbReference>
<dbReference type="RefSeq" id="NP_001338515.1">
    <molecule id="Q5BJF6-3"/>
    <property type="nucleotide sequence ID" value="NM_001351586.2"/>
</dbReference>
<dbReference type="RefSeq" id="NP_002531.3">
    <molecule id="Q5BJF6-3"/>
    <property type="nucleotide sequence ID" value="NM_002540.4"/>
</dbReference>
<dbReference type="RefSeq" id="NP_702910.1">
    <molecule id="Q5BJF6-7"/>
    <property type="nucleotide sequence ID" value="NM_153432.1"/>
</dbReference>
<dbReference type="RefSeq" id="NP_702911.1">
    <molecule id="Q5BJF6-1"/>
    <property type="nucleotide sequence ID" value="NM_153433.2"/>
</dbReference>
<dbReference type="RefSeq" id="NP_702913.1">
    <property type="nucleotide sequence ID" value="NM_153435.1"/>
</dbReference>
<dbReference type="RefSeq" id="NP_702914.1">
    <molecule id="Q5BJF6-10"/>
    <property type="nucleotide sequence ID" value="NM_153436.2"/>
</dbReference>
<dbReference type="RefSeq" id="NP_702915.1">
    <molecule id="Q5BJF6-5"/>
    <property type="nucleotide sequence ID" value="NM_153437.3"/>
</dbReference>
<dbReference type="RefSeq" id="NP_702918.1">
    <molecule id="Q5BJF6-8"/>
    <property type="nucleotide sequence ID" value="NM_153440.2"/>
</dbReference>
<dbReference type="RefSeq" id="XP_006717189.1">
    <property type="nucleotide sequence ID" value="XM_006717126.3"/>
</dbReference>
<dbReference type="RefSeq" id="XP_016870261.1">
    <property type="nucleotide sequence ID" value="XM_017014772.1"/>
</dbReference>
<dbReference type="RefSeq" id="XP_016870262.1">
    <property type="nucleotide sequence ID" value="XM_017014773.1"/>
</dbReference>
<dbReference type="RefSeq" id="XP_016870263.1">
    <property type="nucleotide sequence ID" value="XM_017014774.1"/>
</dbReference>
<dbReference type="RefSeq" id="XP_016870264.1">
    <property type="nucleotide sequence ID" value="XM_017014775.1"/>
</dbReference>
<dbReference type="RefSeq" id="XP_016870265.1">
    <property type="nucleotide sequence ID" value="XM_017014776.1"/>
</dbReference>
<dbReference type="RefSeq" id="XP_016870266.1">
    <property type="nucleotide sequence ID" value="XM_017014777.1"/>
</dbReference>
<dbReference type="SMR" id="Q5BJF6"/>
<dbReference type="BioGRID" id="111010">
    <property type="interactions" value="158"/>
</dbReference>
<dbReference type="CORUM" id="Q5BJF6"/>
<dbReference type="FunCoup" id="Q5BJF6">
    <property type="interactions" value="1814"/>
</dbReference>
<dbReference type="IntAct" id="Q5BJF6">
    <property type="interactions" value="308"/>
</dbReference>
<dbReference type="MINT" id="Q5BJF6"/>
<dbReference type="STRING" id="9606.ENSP00000403453"/>
<dbReference type="MoonProt" id="Q5BJF6"/>
<dbReference type="GlyGen" id="Q5BJF6">
    <property type="glycosylation" value="1 site, 1 O-linked glycan (1 site)"/>
</dbReference>
<dbReference type="iPTMnet" id="Q5BJF6"/>
<dbReference type="PhosphoSitePlus" id="Q5BJF6"/>
<dbReference type="BioMuta" id="ODF2"/>
<dbReference type="DMDM" id="74736013"/>
<dbReference type="jPOST" id="Q5BJF6"/>
<dbReference type="MassIVE" id="Q5BJF6"/>
<dbReference type="PaxDb" id="9606-ENSP00000403453"/>
<dbReference type="PeptideAtlas" id="Q5BJF6"/>
<dbReference type="ProteomicsDB" id="5417"/>
<dbReference type="ProteomicsDB" id="62680">
    <molecule id="Q5BJF6-1"/>
</dbReference>
<dbReference type="ProteomicsDB" id="62681">
    <molecule id="Q5BJF6-2"/>
</dbReference>
<dbReference type="ProteomicsDB" id="62682">
    <molecule id="Q5BJF6-3"/>
</dbReference>
<dbReference type="ProteomicsDB" id="62683">
    <molecule id="Q5BJF6-4"/>
</dbReference>
<dbReference type="ProteomicsDB" id="62684">
    <molecule id="Q5BJF6-5"/>
</dbReference>
<dbReference type="ProteomicsDB" id="62685">
    <molecule id="Q5BJF6-6"/>
</dbReference>
<dbReference type="ProteomicsDB" id="62686">
    <molecule id="Q5BJF6-7"/>
</dbReference>
<dbReference type="ProteomicsDB" id="62687">
    <molecule id="Q5BJF6-8"/>
</dbReference>
<dbReference type="ProteomicsDB" id="62688">
    <molecule id="Q5BJF6-9"/>
</dbReference>
<dbReference type="Pumba" id="Q5BJF6"/>
<dbReference type="Antibodypedia" id="976">
    <property type="antibodies" value="249 antibodies from 34 providers"/>
</dbReference>
<dbReference type="DNASU" id="4957"/>
<dbReference type="Ensembl" id="ENST00000372791.8">
    <molecule id="Q5BJF6-5"/>
    <property type="protein sequence ID" value="ENSP00000361877.3"/>
    <property type="gene ID" value="ENSG00000136811.17"/>
</dbReference>
<dbReference type="Ensembl" id="ENST00000372807.10">
    <molecule id="Q5BJF6-4"/>
    <property type="protein sequence ID" value="ENSP00000361893.5"/>
    <property type="gene ID" value="ENSG00000136811.17"/>
</dbReference>
<dbReference type="Ensembl" id="ENST00000372814.7">
    <molecule id="Q5BJF6-7"/>
    <property type="protein sequence ID" value="ENSP00000361901.3"/>
    <property type="gene ID" value="ENSG00000136811.17"/>
</dbReference>
<dbReference type="Ensembl" id="ENST00000393533.6">
    <molecule id="Q5BJF6-10"/>
    <property type="protein sequence ID" value="ENSP00000377166.2"/>
    <property type="gene ID" value="ENSG00000136811.17"/>
</dbReference>
<dbReference type="Ensembl" id="ENST00000434106.7">
    <molecule id="Q5BJF6-1"/>
    <property type="protein sequence ID" value="ENSP00000403453.2"/>
    <property type="gene ID" value="ENSG00000136811.17"/>
</dbReference>
<dbReference type="Ensembl" id="ENST00000448249.8">
    <molecule id="Q5BJF6-9"/>
    <property type="protein sequence ID" value="ENSP00000396687.2"/>
    <property type="gene ID" value="ENSG00000136811.17"/>
</dbReference>
<dbReference type="Ensembl" id="ENST00000546203.5">
    <molecule id="Q5BJF6-8"/>
    <property type="protein sequence ID" value="ENSP00000437579.1"/>
    <property type="gene ID" value="ENSG00000136811.17"/>
</dbReference>
<dbReference type="Ensembl" id="ENST00000604420.5">
    <molecule id="Q5BJF6-1"/>
    <property type="protein sequence ID" value="ENSP00000473949.2"/>
    <property type="gene ID" value="ENSG00000136811.17"/>
</dbReference>
<dbReference type="GeneID" id="4957"/>
<dbReference type="KEGG" id="hsa:4957"/>
<dbReference type="UCSC" id="uc004bva.4">
    <molecule id="Q5BJF6-1"/>
    <property type="organism name" value="human"/>
</dbReference>
<dbReference type="AGR" id="HGNC:8114"/>
<dbReference type="CTD" id="4957"/>
<dbReference type="DisGeNET" id="4957"/>
<dbReference type="GeneCards" id="ODF2"/>
<dbReference type="HGNC" id="HGNC:8114">
    <property type="gene designation" value="ODF2"/>
</dbReference>
<dbReference type="HPA" id="ENSG00000136811">
    <property type="expression patterns" value="Tissue enriched (testis)"/>
</dbReference>
<dbReference type="MIM" id="602015">
    <property type="type" value="gene"/>
</dbReference>
<dbReference type="neXtProt" id="NX_Q5BJF6"/>
<dbReference type="OpenTargets" id="ENSG00000136811"/>
<dbReference type="PharmGKB" id="PA31902"/>
<dbReference type="VEuPathDB" id="HostDB:ENSG00000136811"/>
<dbReference type="eggNOG" id="ENOG502QUXQ">
    <property type="taxonomic scope" value="Eukaryota"/>
</dbReference>
<dbReference type="GeneTree" id="ENSGT00530000063497"/>
<dbReference type="HOGENOM" id="CLU_018326_0_0_1"/>
<dbReference type="InParanoid" id="Q5BJF6"/>
<dbReference type="OMA" id="HVHINDT"/>
<dbReference type="OrthoDB" id="413404at2759"/>
<dbReference type="PAN-GO" id="Q5BJF6">
    <property type="GO annotations" value="2 GO annotations based on evolutionary models"/>
</dbReference>
<dbReference type="PhylomeDB" id="Q5BJF6"/>
<dbReference type="TreeFam" id="TF328605"/>
<dbReference type="PathwayCommons" id="Q5BJF6"/>
<dbReference type="Reactome" id="R-HSA-2565942">
    <property type="pathway name" value="Regulation of PLK1 Activity at G2/M Transition"/>
</dbReference>
<dbReference type="Reactome" id="R-HSA-380259">
    <property type="pathway name" value="Loss of Nlp from mitotic centrosomes"/>
</dbReference>
<dbReference type="Reactome" id="R-HSA-380270">
    <property type="pathway name" value="Recruitment of mitotic centrosome proteins and complexes"/>
</dbReference>
<dbReference type="Reactome" id="R-HSA-380284">
    <property type="pathway name" value="Loss of proteins required for interphase microtubule organization from the centrosome"/>
</dbReference>
<dbReference type="Reactome" id="R-HSA-380320">
    <property type="pathway name" value="Recruitment of NuMA to mitotic centrosomes"/>
</dbReference>
<dbReference type="Reactome" id="R-HSA-5620912">
    <property type="pathway name" value="Anchoring of the basal body to the plasma membrane"/>
</dbReference>
<dbReference type="Reactome" id="R-HSA-8854518">
    <property type="pathway name" value="AURKA Activation by TPX2"/>
</dbReference>
<dbReference type="SignaLink" id="Q5BJF6"/>
<dbReference type="SIGNOR" id="Q5BJF6"/>
<dbReference type="BioGRID-ORCS" id="4957">
    <property type="hits" value="11 hits in 1157 CRISPR screens"/>
</dbReference>
<dbReference type="CD-CODE" id="8C2F96ED">
    <property type="entry name" value="Centrosome"/>
</dbReference>
<dbReference type="ChiTaRS" id="ODF2">
    <property type="organism name" value="human"/>
</dbReference>
<dbReference type="GeneWiki" id="ODF2"/>
<dbReference type="GenomeRNAi" id="4957"/>
<dbReference type="Pharos" id="Q5BJF6">
    <property type="development level" value="Tbio"/>
</dbReference>
<dbReference type="PRO" id="PR:Q5BJF6"/>
<dbReference type="Proteomes" id="UP000005640">
    <property type="component" value="Chromosome 9"/>
</dbReference>
<dbReference type="RNAct" id="Q5BJF6">
    <property type="molecule type" value="protein"/>
</dbReference>
<dbReference type="Bgee" id="ENSG00000136811">
    <property type="expression patterns" value="Expressed in sperm and 156 other cell types or tissues"/>
</dbReference>
<dbReference type="ExpressionAtlas" id="Q5BJF6">
    <property type="expression patterns" value="baseline and differential"/>
</dbReference>
<dbReference type="GO" id="GO:0120103">
    <property type="term" value="C:centriolar subdistal appendage"/>
    <property type="evidence" value="ECO:0000314"/>
    <property type="project" value="GO_Central"/>
</dbReference>
<dbReference type="GO" id="GO:0005814">
    <property type="term" value="C:centriole"/>
    <property type="evidence" value="ECO:0000314"/>
    <property type="project" value="UniProtKB"/>
</dbReference>
<dbReference type="GO" id="GO:0005813">
    <property type="term" value="C:centrosome"/>
    <property type="evidence" value="ECO:0000314"/>
    <property type="project" value="HPA"/>
</dbReference>
<dbReference type="GO" id="GO:0036064">
    <property type="term" value="C:ciliary basal body"/>
    <property type="evidence" value="ECO:0000314"/>
    <property type="project" value="HPA"/>
</dbReference>
<dbReference type="GO" id="GO:0005929">
    <property type="term" value="C:cilium"/>
    <property type="evidence" value="ECO:0000314"/>
    <property type="project" value="HPA"/>
</dbReference>
<dbReference type="GO" id="GO:0005829">
    <property type="term" value="C:cytosol"/>
    <property type="evidence" value="ECO:0000304"/>
    <property type="project" value="Reactome"/>
</dbReference>
<dbReference type="GO" id="GO:0043231">
    <property type="term" value="C:intracellular membrane-bounded organelle"/>
    <property type="evidence" value="ECO:0000314"/>
    <property type="project" value="HPA"/>
</dbReference>
<dbReference type="GO" id="GO:0005874">
    <property type="term" value="C:microtubule"/>
    <property type="evidence" value="ECO:0007669"/>
    <property type="project" value="UniProtKB-KW"/>
</dbReference>
<dbReference type="GO" id="GO:0015630">
    <property type="term" value="C:microtubule cytoskeleton"/>
    <property type="evidence" value="ECO:0000314"/>
    <property type="project" value="HPA"/>
</dbReference>
<dbReference type="GO" id="GO:0005634">
    <property type="term" value="C:nucleus"/>
    <property type="evidence" value="ECO:0007005"/>
    <property type="project" value="UniProtKB"/>
</dbReference>
<dbReference type="GO" id="GO:0036126">
    <property type="term" value="C:sperm flagellum"/>
    <property type="evidence" value="ECO:0000250"/>
    <property type="project" value="UniProtKB"/>
</dbReference>
<dbReference type="GO" id="GO:0097225">
    <property type="term" value="C:sperm midpiece"/>
    <property type="evidence" value="ECO:0000250"/>
    <property type="project" value="UniProtKB"/>
</dbReference>
<dbReference type="GO" id="GO:0097228">
    <property type="term" value="C:sperm principal piece"/>
    <property type="evidence" value="ECO:0000250"/>
    <property type="project" value="UniProtKB"/>
</dbReference>
<dbReference type="GO" id="GO:0000922">
    <property type="term" value="C:spindle pole"/>
    <property type="evidence" value="ECO:0007669"/>
    <property type="project" value="UniProtKB-SubCell"/>
</dbReference>
<dbReference type="GO" id="GO:0031267">
    <property type="term" value="F:small GTPase binding"/>
    <property type="evidence" value="ECO:0000353"/>
    <property type="project" value="UniProtKB"/>
</dbReference>
<dbReference type="GO" id="GO:0005198">
    <property type="term" value="F:structural molecule activity"/>
    <property type="evidence" value="ECO:0000304"/>
    <property type="project" value="ProtInc"/>
</dbReference>
<dbReference type="GO" id="GO:0030154">
    <property type="term" value="P:cell differentiation"/>
    <property type="evidence" value="ECO:0007669"/>
    <property type="project" value="UniProtKB-KW"/>
</dbReference>
<dbReference type="GO" id="GO:0010457">
    <property type="term" value="P:centriole-centriole cohesion"/>
    <property type="evidence" value="ECO:0000316"/>
    <property type="project" value="GO_Central"/>
</dbReference>
<dbReference type="GO" id="GO:0044782">
    <property type="term" value="P:cilium organization"/>
    <property type="evidence" value="ECO:0000316"/>
    <property type="project" value="ARUK-UCL"/>
</dbReference>
<dbReference type="GO" id="GO:0008104">
    <property type="term" value="P:protein localization"/>
    <property type="evidence" value="ECO:0000315"/>
    <property type="project" value="GO_Central"/>
</dbReference>
<dbReference type="GO" id="GO:1902017">
    <property type="term" value="P:regulation of cilium assembly"/>
    <property type="evidence" value="ECO:0000315"/>
    <property type="project" value="UniProtKB"/>
</dbReference>
<dbReference type="GO" id="GO:0007283">
    <property type="term" value="P:spermatogenesis"/>
    <property type="evidence" value="ECO:0007669"/>
    <property type="project" value="UniProtKB-KW"/>
</dbReference>
<dbReference type="InterPro" id="IPR026099">
    <property type="entry name" value="Odf2-rel"/>
</dbReference>
<dbReference type="PANTHER" id="PTHR23162">
    <property type="entry name" value="OUTER DENSE FIBER OF SPERM TAILS 2"/>
    <property type="match status" value="1"/>
</dbReference>
<dbReference type="PANTHER" id="PTHR23162:SF8">
    <property type="entry name" value="OUTER DENSE FIBER PROTEIN 2"/>
    <property type="match status" value="1"/>
</dbReference>
<proteinExistence type="evidence at protein level"/>
<accession>Q5BJF6</accession>
<accession>B1AND3</accession>
<accession>B4DRK4</accession>
<accession>B4DX73</accession>
<accession>B4DZ02</accession>
<accession>E7EWL2</accession>
<accession>F5H6J4</accession>
<accession>O14721</accession>
<accession>O60631</accession>
<accession>Q1W2J6</accession>
<accession>Q6UN26</accession>
<accession>Q7Z5I6</accession>
<accession>Q96FN2</accession>